<evidence type="ECO:0000255" key="1">
    <source>
        <dbReference type="HAMAP-Rule" id="MF_00004"/>
    </source>
</evidence>
<evidence type="ECO:0000305" key="2"/>
<feature type="chain" id="PRO_0000334714" description="Adenine phosphoribosyltransferase">
    <location>
        <begin position="1"/>
        <end position="177"/>
    </location>
</feature>
<reference key="1">
    <citation type="journal article" date="2008" name="J. Bacteriol.">
        <title>Complete genome sequence of Leuconostoc citreum KM20.</title>
        <authorList>
            <person name="Kim J.F."/>
            <person name="Jeong H."/>
            <person name="Lee J.-S."/>
            <person name="Choi S.-H."/>
            <person name="Ha M."/>
            <person name="Hur C.-G."/>
            <person name="Kim J.-S."/>
            <person name="Lee S."/>
            <person name="Park H.-S."/>
            <person name="Park Y.-H."/>
            <person name="Oh T.K."/>
        </authorList>
    </citation>
    <scope>NUCLEOTIDE SEQUENCE [LARGE SCALE GENOMIC DNA]</scope>
    <source>
        <strain>KM20</strain>
    </source>
</reference>
<proteinExistence type="inferred from homology"/>
<name>APT_LEUCK</name>
<accession>B1MZQ2</accession>
<keyword id="KW-0963">Cytoplasm</keyword>
<keyword id="KW-0328">Glycosyltransferase</keyword>
<keyword id="KW-0660">Purine salvage</keyword>
<keyword id="KW-1185">Reference proteome</keyword>
<keyword id="KW-0808">Transferase</keyword>
<comment type="function">
    <text evidence="1">Catalyzes a salvage reaction resulting in the formation of AMP, that is energically less costly than de novo synthesis.</text>
</comment>
<comment type="catalytic activity">
    <reaction evidence="1">
        <text>AMP + diphosphate = 5-phospho-alpha-D-ribose 1-diphosphate + adenine</text>
        <dbReference type="Rhea" id="RHEA:16609"/>
        <dbReference type="ChEBI" id="CHEBI:16708"/>
        <dbReference type="ChEBI" id="CHEBI:33019"/>
        <dbReference type="ChEBI" id="CHEBI:58017"/>
        <dbReference type="ChEBI" id="CHEBI:456215"/>
        <dbReference type="EC" id="2.4.2.7"/>
    </reaction>
</comment>
<comment type="pathway">
    <text evidence="1">Purine metabolism; AMP biosynthesis via salvage pathway; AMP from adenine: step 1/1.</text>
</comment>
<comment type="subunit">
    <text evidence="1">Homodimer.</text>
</comment>
<comment type="subcellular location">
    <subcellularLocation>
        <location evidence="1">Cytoplasm</location>
    </subcellularLocation>
</comment>
<comment type="similarity">
    <text evidence="1">Belongs to the purine/pyrimidine phosphoribosyltransferase family.</text>
</comment>
<comment type="sequence caution" evidence="2">
    <conflict type="erroneous initiation">
        <sequence resource="EMBL-CDS" id="ACA83004"/>
    </conflict>
</comment>
<sequence length="177" mass="19008">MTVDLYNYVATVENFPEPGVNFRDISPLMGDGVAYKQAVDAIADFAKDLNVDLIAGPESRGFIVGSPLAYALNIGFVPARKGGKLPRAAVSAAYSLEYGGENVLEIHQDAIKPGQRVLIVDDLLATGGTINATREIIEKLGGIVAGVAFIIELTDLHGREKIMQNGREVPFLTLMTY</sequence>
<protein>
    <recommendedName>
        <fullName evidence="1">Adenine phosphoribosyltransferase</fullName>
        <shortName evidence="1">APRT</shortName>
        <ecNumber evidence="1">2.4.2.7</ecNumber>
    </recommendedName>
</protein>
<gene>
    <name evidence="1" type="primary">apt</name>
    <name type="ordered locus">LCK_01177</name>
</gene>
<dbReference type="EC" id="2.4.2.7" evidence="1"/>
<dbReference type="EMBL" id="DQ489736">
    <property type="protein sequence ID" value="ACA83004.1"/>
    <property type="status" value="ALT_INIT"/>
    <property type="molecule type" value="Genomic_DNA"/>
</dbReference>
<dbReference type="RefSeq" id="WP_004903276.1">
    <property type="nucleotide sequence ID" value="NC_010471.1"/>
</dbReference>
<dbReference type="SMR" id="B1MZQ2"/>
<dbReference type="STRING" id="349519.LCK_01177"/>
<dbReference type="KEGG" id="lci:LCK_01177"/>
<dbReference type="eggNOG" id="COG0503">
    <property type="taxonomic scope" value="Bacteria"/>
</dbReference>
<dbReference type="HOGENOM" id="CLU_063339_3_0_9"/>
<dbReference type="OrthoDB" id="9803963at2"/>
<dbReference type="UniPathway" id="UPA00588">
    <property type="reaction ID" value="UER00646"/>
</dbReference>
<dbReference type="Proteomes" id="UP000002166">
    <property type="component" value="Chromosome"/>
</dbReference>
<dbReference type="GO" id="GO:0005737">
    <property type="term" value="C:cytoplasm"/>
    <property type="evidence" value="ECO:0007669"/>
    <property type="project" value="UniProtKB-SubCell"/>
</dbReference>
<dbReference type="GO" id="GO:0002055">
    <property type="term" value="F:adenine binding"/>
    <property type="evidence" value="ECO:0007669"/>
    <property type="project" value="TreeGrafter"/>
</dbReference>
<dbReference type="GO" id="GO:0003999">
    <property type="term" value="F:adenine phosphoribosyltransferase activity"/>
    <property type="evidence" value="ECO:0007669"/>
    <property type="project" value="UniProtKB-UniRule"/>
</dbReference>
<dbReference type="GO" id="GO:0016208">
    <property type="term" value="F:AMP binding"/>
    <property type="evidence" value="ECO:0007669"/>
    <property type="project" value="TreeGrafter"/>
</dbReference>
<dbReference type="GO" id="GO:0006168">
    <property type="term" value="P:adenine salvage"/>
    <property type="evidence" value="ECO:0007669"/>
    <property type="project" value="InterPro"/>
</dbReference>
<dbReference type="GO" id="GO:0044209">
    <property type="term" value="P:AMP salvage"/>
    <property type="evidence" value="ECO:0007669"/>
    <property type="project" value="UniProtKB-UniRule"/>
</dbReference>
<dbReference type="GO" id="GO:0006166">
    <property type="term" value="P:purine ribonucleoside salvage"/>
    <property type="evidence" value="ECO:0007669"/>
    <property type="project" value="UniProtKB-KW"/>
</dbReference>
<dbReference type="CDD" id="cd06223">
    <property type="entry name" value="PRTases_typeI"/>
    <property type="match status" value="1"/>
</dbReference>
<dbReference type="FunFam" id="3.40.50.2020:FF:000004">
    <property type="entry name" value="Adenine phosphoribosyltransferase"/>
    <property type="match status" value="1"/>
</dbReference>
<dbReference type="Gene3D" id="3.40.50.2020">
    <property type="match status" value="1"/>
</dbReference>
<dbReference type="HAMAP" id="MF_00004">
    <property type="entry name" value="Aden_phosphoribosyltr"/>
    <property type="match status" value="1"/>
</dbReference>
<dbReference type="InterPro" id="IPR005764">
    <property type="entry name" value="Ade_phspho_trans"/>
</dbReference>
<dbReference type="InterPro" id="IPR000836">
    <property type="entry name" value="PRibTrfase_dom"/>
</dbReference>
<dbReference type="InterPro" id="IPR029057">
    <property type="entry name" value="PRTase-like"/>
</dbReference>
<dbReference type="InterPro" id="IPR050054">
    <property type="entry name" value="UPRTase/APRTase"/>
</dbReference>
<dbReference type="NCBIfam" id="TIGR01090">
    <property type="entry name" value="apt"/>
    <property type="match status" value="1"/>
</dbReference>
<dbReference type="NCBIfam" id="NF002633">
    <property type="entry name" value="PRK02304.1-2"/>
    <property type="match status" value="1"/>
</dbReference>
<dbReference type="NCBIfam" id="NF002634">
    <property type="entry name" value="PRK02304.1-3"/>
    <property type="match status" value="1"/>
</dbReference>
<dbReference type="NCBIfam" id="NF002636">
    <property type="entry name" value="PRK02304.1-5"/>
    <property type="match status" value="1"/>
</dbReference>
<dbReference type="PANTHER" id="PTHR32315">
    <property type="entry name" value="ADENINE PHOSPHORIBOSYLTRANSFERASE"/>
    <property type="match status" value="1"/>
</dbReference>
<dbReference type="PANTHER" id="PTHR32315:SF3">
    <property type="entry name" value="ADENINE PHOSPHORIBOSYLTRANSFERASE"/>
    <property type="match status" value="1"/>
</dbReference>
<dbReference type="Pfam" id="PF00156">
    <property type="entry name" value="Pribosyltran"/>
    <property type="match status" value="1"/>
</dbReference>
<dbReference type="SUPFAM" id="SSF53271">
    <property type="entry name" value="PRTase-like"/>
    <property type="match status" value="1"/>
</dbReference>
<dbReference type="PROSITE" id="PS00103">
    <property type="entry name" value="PUR_PYR_PR_TRANSFER"/>
    <property type="match status" value="1"/>
</dbReference>
<organism>
    <name type="scientific">Leuconostoc citreum (strain KM20)</name>
    <dbReference type="NCBI Taxonomy" id="349519"/>
    <lineage>
        <taxon>Bacteria</taxon>
        <taxon>Bacillati</taxon>
        <taxon>Bacillota</taxon>
        <taxon>Bacilli</taxon>
        <taxon>Lactobacillales</taxon>
        <taxon>Lactobacillaceae</taxon>
        <taxon>Leuconostoc</taxon>
    </lineage>
</organism>